<reference key="1">
    <citation type="journal article" date="1993" name="Virology">
        <title>DNA sequence analysis of conserved and unique regions of swinepox virus: identification of genetic elements supporting phenotypic observations including a novel G protein-coupled receptor homologue.</title>
        <authorList>
            <person name="Massung R.F."/>
            <person name="Jayarama V."/>
            <person name="Moyer R.W."/>
        </authorList>
    </citation>
    <scope>NUCLEOTIDE SEQUENCE</scope>
</reference>
<comment type="function">
    <text evidence="1">Ribonucleoside-diphosphate reductase holoenzyme provides the precursors necessary for viral DNA synthesis. Allows virus growth in non-dividing cells. Catalyzes the biosynthesis of deoxyribonucleotides from the corresponding ribonucleotides (By similarity).</text>
</comment>
<comment type="catalytic activity">
    <reaction evidence="2">
        <text>a 2'-deoxyribonucleoside 5'-diphosphate + [thioredoxin]-disulfide + H2O = a ribonucleoside 5'-diphosphate + [thioredoxin]-dithiol</text>
        <dbReference type="Rhea" id="RHEA:23252"/>
        <dbReference type="Rhea" id="RHEA-COMP:10698"/>
        <dbReference type="Rhea" id="RHEA-COMP:10700"/>
        <dbReference type="ChEBI" id="CHEBI:15377"/>
        <dbReference type="ChEBI" id="CHEBI:29950"/>
        <dbReference type="ChEBI" id="CHEBI:50058"/>
        <dbReference type="ChEBI" id="CHEBI:57930"/>
        <dbReference type="ChEBI" id="CHEBI:73316"/>
        <dbReference type="EC" id="1.17.4.1"/>
    </reaction>
</comment>
<comment type="cofactor">
    <cofactor evidence="1">
        <name>Fe cation</name>
        <dbReference type="ChEBI" id="CHEBI:24875"/>
    </cofactor>
    <text evidence="1">Binds 2 iron ions per subunit.</text>
</comment>
<comment type="subunit">
    <text>Heterodimer of a large and a small chain.</text>
</comment>
<comment type="similarity">
    <text evidence="3">Belongs to the ribonucleoside diphosphate reductase small chain family.</text>
</comment>
<organismHost>
    <name type="scientific">Sus scrofa</name>
    <name type="common">Pig</name>
    <dbReference type="NCBI Taxonomy" id="9823"/>
</organismHost>
<sequence length="274" mass="31753">MEPILQESDSRFVIFPIKYHDIWKMYKQSVASFWTVEEVDLSKDLDDWDKLTKDEKYFIKHILAFFASSDGIVNENLAERFYVDVQCSEARCFYGFQIAMENIHSEMYSLLIDTYVRDNIEKMHLFNAIETMECVKKKADWARKWISSNKVYGERVVAFAAVEGIFFSGSFAAIFWIKKRGLMPGLTFSNELISRDEGLHCDFACLMFKHLLHPPSKEVITSIIIDAVNIEKEFLTVAIPVDLIGMNCCLMSQYIEFVADRLLTELGCEKSQCI</sequence>
<accession>P32209</accession>
<keyword id="KW-0215">Deoxyribonucleotide synthesis</keyword>
<keyword id="KW-0408">Iron</keyword>
<keyword id="KW-0479">Metal-binding</keyword>
<keyword id="KW-0560">Oxidoreductase</keyword>
<name>RIR2_SWPVK</name>
<gene>
    <name type="ORF">C14L</name>
</gene>
<feature type="chain" id="PRO_0000190500" description="Ribonucleoside-diphosphate reductase small chain">
    <location>
        <begin position="1"/>
        <end position="274"/>
    </location>
</feature>
<feature type="active site" evidence="2">
    <location>
        <position position="108"/>
    </location>
</feature>
<feature type="binding site" evidence="2">
    <location>
        <position position="70"/>
    </location>
    <ligand>
        <name>Fe cation</name>
        <dbReference type="ChEBI" id="CHEBI:24875"/>
        <label>1</label>
    </ligand>
</feature>
<feature type="binding site" evidence="2">
    <location>
        <position position="101"/>
    </location>
    <ligand>
        <name>Fe cation</name>
        <dbReference type="ChEBI" id="CHEBI:24875"/>
        <label>1</label>
    </ligand>
</feature>
<feature type="binding site" evidence="1">
    <location>
        <position position="101"/>
    </location>
    <ligand>
        <name>Fe cation</name>
        <dbReference type="ChEBI" id="CHEBI:24875"/>
        <label>2</label>
    </ligand>
</feature>
<feature type="binding site" evidence="2">
    <location>
        <position position="104"/>
    </location>
    <ligand>
        <name>Fe cation</name>
        <dbReference type="ChEBI" id="CHEBI:24875"/>
        <label>1</label>
    </ligand>
</feature>
<feature type="binding site" evidence="1">
    <location>
        <position position="163"/>
    </location>
    <ligand>
        <name>Fe cation</name>
        <dbReference type="ChEBI" id="CHEBI:24875"/>
        <label>2</label>
    </ligand>
</feature>
<feature type="binding site" evidence="1">
    <location>
        <position position="197"/>
    </location>
    <ligand>
        <name>Fe cation</name>
        <dbReference type="ChEBI" id="CHEBI:24875"/>
        <label>2</label>
    </ligand>
</feature>
<feature type="binding site" evidence="1">
    <location>
        <position position="200"/>
    </location>
    <ligand>
        <name>Fe cation</name>
        <dbReference type="ChEBI" id="CHEBI:24875"/>
        <label>2</label>
    </ligand>
</feature>
<evidence type="ECO:0000250" key="1"/>
<evidence type="ECO:0000255" key="2">
    <source>
        <dbReference type="PROSITE-ProRule" id="PRU10014"/>
    </source>
</evidence>
<evidence type="ECO:0000305" key="3"/>
<proteinExistence type="inferred from homology"/>
<protein>
    <recommendedName>
        <fullName>Ribonucleoside-diphosphate reductase small chain</fullName>
        <ecNumber>1.17.4.1</ecNumber>
    </recommendedName>
    <alternativeName>
        <fullName>Ribonucleotide reductase small subunit</fullName>
    </alternativeName>
</protein>
<dbReference type="EC" id="1.17.4.1"/>
<dbReference type="EMBL" id="L22013">
    <property type="protein sequence ID" value="AAC37857.1"/>
    <property type="molecule type" value="Unassigned_RNA"/>
</dbReference>
<dbReference type="SMR" id="P32209"/>
<dbReference type="GO" id="GO:0046872">
    <property type="term" value="F:metal ion binding"/>
    <property type="evidence" value="ECO:0007669"/>
    <property type="project" value="UniProtKB-KW"/>
</dbReference>
<dbReference type="GO" id="GO:0004748">
    <property type="term" value="F:ribonucleoside-diphosphate reductase activity, thioredoxin disulfide as acceptor"/>
    <property type="evidence" value="ECO:0007669"/>
    <property type="project" value="UniProtKB-EC"/>
</dbReference>
<dbReference type="GO" id="GO:0009263">
    <property type="term" value="P:deoxyribonucleotide biosynthetic process"/>
    <property type="evidence" value="ECO:0007669"/>
    <property type="project" value="UniProtKB-KW"/>
</dbReference>
<dbReference type="CDD" id="cd01049">
    <property type="entry name" value="RNRR2"/>
    <property type="match status" value="1"/>
</dbReference>
<dbReference type="Gene3D" id="1.10.620.20">
    <property type="entry name" value="Ribonucleotide Reductase, subunit A"/>
    <property type="match status" value="1"/>
</dbReference>
<dbReference type="InterPro" id="IPR009078">
    <property type="entry name" value="Ferritin-like_SF"/>
</dbReference>
<dbReference type="InterPro" id="IPR012348">
    <property type="entry name" value="RNR-like"/>
</dbReference>
<dbReference type="InterPro" id="IPR033909">
    <property type="entry name" value="RNR_small"/>
</dbReference>
<dbReference type="InterPro" id="IPR030475">
    <property type="entry name" value="RNR_small_AS"/>
</dbReference>
<dbReference type="InterPro" id="IPR000358">
    <property type="entry name" value="RNR_small_fam"/>
</dbReference>
<dbReference type="PANTHER" id="PTHR23409">
    <property type="entry name" value="RIBONUCLEOSIDE-DIPHOSPHATE REDUCTASE SMALL CHAIN"/>
    <property type="match status" value="1"/>
</dbReference>
<dbReference type="PANTHER" id="PTHR23409:SF18">
    <property type="entry name" value="RIBONUCLEOSIDE-DIPHOSPHATE REDUCTASE SUBUNIT M2"/>
    <property type="match status" value="1"/>
</dbReference>
<dbReference type="Pfam" id="PF00268">
    <property type="entry name" value="Ribonuc_red_sm"/>
    <property type="match status" value="1"/>
</dbReference>
<dbReference type="SUPFAM" id="SSF47240">
    <property type="entry name" value="Ferritin-like"/>
    <property type="match status" value="1"/>
</dbReference>
<dbReference type="PROSITE" id="PS00368">
    <property type="entry name" value="RIBORED_SMALL"/>
    <property type="match status" value="1"/>
</dbReference>
<organism>
    <name type="scientific">Swinepox virus (strain Kasza)</name>
    <name type="common">SWPV</name>
    <dbReference type="NCBI Taxonomy" id="10277"/>
    <lineage>
        <taxon>Viruses</taxon>
        <taxon>Varidnaviria</taxon>
        <taxon>Bamfordvirae</taxon>
        <taxon>Nucleocytoviricota</taxon>
        <taxon>Pokkesviricetes</taxon>
        <taxon>Chitovirales</taxon>
        <taxon>Poxviridae</taxon>
        <taxon>Chordopoxvirinae</taxon>
        <taxon>Suipoxvirus</taxon>
        <taxon>Swinepox virus</taxon>
    </lineage>
</organism>